<name>PSAL_GLOVI</name>
<sequence>MTLARYVYTPDPQEGTLLTPVNNSTAIRWFIDNLPINRVGMDEFTRGLEIGMAHGYWLIGPFALLGPLRNTELGLVAGLVSTIGLLLISTIGLSGYASLVEDVPTEFDRKGWSRLAGGFLVGGVGGAIFAFAILQFFPLVSAIARIP</sequence>
<comment type="subunit">
    <text>The G.violaceus PSI reaction center is composed of one copy each of PsaA,B,C,D,E,F,L,M and Z, and forms trimeric complexes.</text>
</comment>
<comment type="subcellular location">
    <subcellularLocation>
        <location>Cell inner membrane</location>
        <topology>Multi-pass membrane protein</topology>
    </subcellularLocation>
</comment>
<comment type="similarity">
    <text evidence="2">Belongs to the PsaL family.</text>
</comment>
<protein>
    <recommendedName>
        <fullName>Photosystem I reaction center subunit XI</fullName>
    </recommendedName>
    <alternativeName>
        <fullName>PSI subunit V</fullName>
    </alternativeName>
    <alternativeName>
        <fullName>PSI-L</fullName>
    </alternativeName>
</protein>
<keyword id="KW-0002">3D-structure</keyword>
<keyword id="KW-0997">Cell inner membrane</keyword>
<keyword id="KW-1003">Cell membrane</keyword>
<keyword id="KW-0472">Membrane</keyword>
<keyword id="KW-0602">Photosynthesis</keyword>
<keyword id="KW-0603">Photosystem I</keyword>
<keyword id="KW-1185">Reference proteome</keyword>
<keyword id="KW-0812">Transmembrane</keyword>
<keyword id="KW-1133">Transmembrane helix</keyword>
<gene>
    <name type="primary">psaL</name>
    <name type="ordered locus">glr2236</name>
</gene>
<feature type="chain" id="PRO_0000194688" description="Photosystem I reaction center subunit XI">
    <location>
        <begin position="1"/>
        <end position="147"/>
    </location>
</feature>
<feature type="transmembrane region" description="Helical" evidence="1">
    <location>
        <begin position="73"/>
        <end position="95"/>
    </location>
</feature>
<feature type="transmembrane region" description="Helical" evidence="1">
    <location>
        <begin position="115"/>
        <end position="137"/>
    </location>
</feature>
<dbReference type="EMBL" id="BA000045">
    <property type="protein sequence ID" value="BAC90177.1"/>
    <property type="molecule type" value="Genomic_DNA"/>
</dbReference>
<dbReference type="RefSeq" id="NP_925182.1">
    <property type="nucleotide sequence ID" value="NC_005125.1"/>
</dbReference>
<dbReference type="RefSeq" id="WP_011142233.1">
    <property type="nucleotide sequence ID" value="NC_005125.1"/>
</dbReference>
<dbReference type="PDB" id="7F4V">
    <property type="method" value="EM"/>
    <property type="resolution" value="2.04 A"/>
    <property type="chains" value="aL/bL/cL=1-147"/>
</dbReference>
<dbReference type="PDBsum" id="7F4V"/>
<dbReference type="EMDB" id="EMD-31455"/>
<dbReference type="SMR" id="Q7NIE7"/>
<dbReference type="STRING" id="251221.gene:10759731"/>
<dbReference type="EnsemblBacteria" id="BAC90177">
    <property type="protein sequence ID" value="BAC90177"/>
    <property type="gene ID" value="BAC90177"/>
</dbReference>
<dbReference type="KEGG" id="gvi:glr2236"/>
<dbReference type="PATRIC" id="fig|251221.4.peg.2269"/>
<dbReference type="eggNOG" id="ENOG5032X7V">
    <property type="taxonomic scope" value="Bacteria"/>
</dbReference>
<dbReference type="HOGENOM" id="CLU_092204_1_0_3"/>
<dbReference type="InParanoid" id="Q7NIE7"/>
<dbReference type="OrthoDB" id="464381at2"/>
<dbReference type="PhylomeDB" id="Q7NIE7"/>
<dbReference type="Proteomes" id="UP000000557">
    <property type="component" value="Chromosome"/>
</dbReference>
<dbReference type="GO" id="GO:0009538">
    <property type="term" value="C:photosystem I reaction center"/>
    <property type="evidence" value="ECO:0007669"/>
    <property type="project" value="InterPro"/>
</dbReference>
<dbReference type="GO" id="GO:0005886">
    <property type="term" value="C:plasma membrane"/>
    <property type="evidence" value="ECO:0007669"/>
    <property type="project" value="UniProtKB-SubCell"/>
</dbReference>
<dbReference type="GO" id="GO:0015979">
    <property type="term" value="P:photosynthesis"/>
    <property type="evidence" value="ECO:0007669"/>
    <property type="project" value="UniProtKB-UniRule"/>
</dbReference>
<dbReference type="Gene3D" id="1.20.1240.10">
    <property type="entry name" value="Photosystem I PsaL, reaction centre subunit XI"/>
    <property type="match status" value="1"/>
</dbReference>
<dbReference type="HAMAP" id="MF_00447">
    <property type="entry name" value="PSI_PsaL"/>
    <property type="match status" value="1"/>
</dbReference>
<dbReference type="InterPro" id="IPR003757">
    <property type="entry name" value="PSI_PsaL"/>
</dbReference>
<dbReference type="InterPro" id="IPR036592">
    <property type="entry name" value="PSI_PsaL_sf"/>
</dbReference>
<dbReference type="InterPro" id="IPR022980">
    <property type="entry name" value="PSI_suXI"/>
</dbReference>
<dbReference type="PANTHER" id="PTHR34803">
    <property type="entry name" value="PHOTOSYSTEM I REACTION CENTER SUBUNIT XI, CHLOROPLASTIC"/>
    <property type="match status" value="1"/>
</dbReference>
<dbReference type="PANTHER" id="PTHR34803:SF2">
    <property type="entry name" value="PHOTOSYSTEM I REACTION CENTER SUBUNIT XI, CHLOROPLASTIC"/>
    <property type="match status" value="1"/>
</dbReference>
<dbReference type="Pfam" id="PF02605">
    <property type="entry name" value="PsaL"/>
    <property type="match status" value="1"/>
</dbReference>
<dbReference type="SUPFAM" id="SSF81568">
    <property type="entry name" value="Photosystem I reaction center subunit XI, PsaL"/>
    <property type="match status" value="1"/>
</dbReference>
<organism>
    <name type="scientific">Gloeobacter violaceus (strain ATCC 29082 / PCC 7421)</name>
    <dbReference type="NCBI Taxonomy" id="251221"/>
    <lineage>
        <taxon>Bacteria</taxon>
        <taxon>Bacillati</taxon>
        <taxon>Cyanobacteriota</taxon>
        <taxon>Cyanophyceae</taxon>
        <taxon>Gloeobacterales</taxon>
        <taxon>Gloeobacteraceae</taxon>
        <taxon>Gloeobacter</taxon>
    </lineage>
</organism>
<proteinExistence type="evidence at protein level"/>
<reference key="1">
    <citation type="journal article" date="2003" name="DNA Res.">
        <title>Complete genome structure of Gloeobacter violaceus PCC 7421, a cyanobacterium that lacks thylakoids.</title>
        <authorList>
            <person name="Nakamura Y."/>
            <person name="Kaneko T."/>
            <person name="Sato S."/>
            <person name="Mimuro M."/>
            <person name="Miyashita H."/>
            <person name="Tsuchiya T."/>
            <person name="Sasamoto S."/>
            <person name="Watanabe A."/>
            <person name="Kawashima K."/>
            <person name="Kishida Y."/>
            <person name="Kiyokawa C."/>
            <person name="Kohara M."/>
            <person name="Matsumoto M."/>
            <person name="Matsuno A."/>
            <person name="Nakazaki N."/>
            <person name="Shimpo S."/>
            <person name="Takeuchi C."/>
            <person name="Yamada M."/>
            <person name="Tabata S."/>
        </authorList>
    </citation>
    <scope>NUCLEOTIDE SEQUENCE [LARGE SCALE GENOMIC DNA]</scope>
    <source>
        <strain>ATCC 29082 / PCC 7421</strain>
    </source>
</reference>
<reference key="2">
    <citation type="journal article" date="2004" name="FEBS Lett.">
        <title>Unique constitution of photosystem I with a novel subunit in the cyanobacterium Gloeobacter violaceus PCC 7421.</title>
        <authorList>
            <person name="Inoue H."/>
            <person name="Tsuchiya T."/>
            <person name="Satoh S."/>
            <person name="Miyashita H."/>
            <person name="Kaneko T."/>
            <person name="Tabata S."/>
            <person name="Tanaka A."/>
            <person name="Mimuro M."/>
        </authorList>
    </citation>
    <scope>IDENTIFICATION BY MASS SPECTROMETRY</scope>
    <scope>CHARACTERIZATION OF PHOTOSYSTEM I</scope>
    <source>
        <strain>ATCC 29082 / PCC 7421</strain>
    </source>
</reference>
<evidence type="ECO:0000255" key="1"/>
<evidence type="ECO:0000305" key="2"/>
<accession>Q7NIE7</accession>